<proteinExistence type="inferred from homology"/>
<comment type="function">
    <text evidence="1">The UvrABC repair system catalyzes the recognition and processing of DNA lesions. UvrC both incises the 5' and 3' sides of the lesion. The N-terminal half is responsible for the 3' incision and the C-terminal half is responsible for the 5' incision.</text>
</comment>
<comment type="subunit">
    <text evidence="1">Interacts with UvrB in an incision complex.</text>
</comment>
<comment type="subcellular location">
    <subcellularLocation>
        <location evidence="1">Cytoplasm</location>
    </subcellularLocation>
</comment>
<comment type="similarity">
    <text evidence="1">Belongs to the UvrC family.</text>
</comment>
<organism>
    <name type="scientific">Streptococcus pneumoniae serotype 19F (strain G54)</name>
    <dbReference type="NCBI Taxonomy" id="512566"/>
    <lineage>
        <taxon>Bacteria</taxon>
        <taxon>Bacillati</taxon>
        <taxon>Bacillota</taxon>
        <taxon>Bacilli</taxon>
        <taxon>Lactobacillales</taxon>
        <taxon>Streptococcaceae</taxon>
        <taxon>Streptococcus</taxon>
    </lineage>
</organism>
<gene>
    <name evidence="1" type="primary">uvrC</name>
    <name type="ordered locus">SPG_0561</name>
</gene>
<name>UVRC_STRP4</name>
<dbReference type="EMBL" id="CP001015">
    <property type="protein sequence ID" value="ACF56685.1"/>
    <property type="molecule type" value="Genomic_DNA"/>
</dbReference>
<dbReference type="SMR" id="B5E2L2"/>
<dbReference type="KEGG" id="spx:SPG_0561"/>
<dbReference type="HOGENOM" id="CLU_014841_3_2_9"/>
<dbReference type="GO" id="GO:0005737">
    <property type="term" value="C:cytoplasm"/>
    <property type="evidence" value="ECO:0007669"/>
    <property type="project" value="UniProtKB-SubCell"/>
</dbReference>
<dbReference type="GO" id="GO:0009380">
    <property type="term" value="C:excinuclease repair complex"/>
    <property type="evidence" value="ECO:0007669"/>
    <property type="project" value="InterPro"/>
</dbReference>
<dbReference type="GO" id="GO:0003677">
    <property type="term" value="F:DNA binding"/>
    <property type="evidence" value="ECO:0007669"/>
    <property type="project" value="UniProtKB-UniRule"/>
</dbReference>
<dbReference type="GO" id="GO:0009381">
    <property type="term" value="F:excinuclease ABC activity"/>
    <property type="evidence" value="ECO:0007669"/>
    <property type="project" value="UniProtKB-UniRule"/>
</dbReference>
<dbReference type="GO" id="GO:0006289">
    <property type="term" value="P:nucleotide-excision repair"/>
    <property type="evidence" value="ECO:0007669"/>
    <property type="project" value="UniProtKB-UniRule"/>
</dbReference>
<dbReference type="GO" id="GO:0009432">
    <property type="term" value="P:SOS response"/>
    <property type="evidence" value="ECO:0007669"/>
    <property type="project" value="UniProtKB-UniRule"/>
</dbReference>
<dbReference type="CDD" id="cd10434">
    <property type="entry name" value="GIY-YIG_UvrC_Cho"/>
    <property type="match status" value="1"/>
</dbReference>
<dbReference type="FunFam" id="1.10.150.20:FF:000005">
    <property type="entry name" value="UvrABC system protein C"/>
    <property type="match status" value="1"/>
</dbReference>
<dbReference type="FunFam" id="3.30.420.340:FF:000002">
    <property type="entry name" value="UvrABC system protein C"/>
    <property type="match status" value="1"/>
</dbReference>
<dbReference type="FunFam" id="3.40.1440.10:FF:000001">
    <property type="entry name" value="UvrABC system protein C"/>
    <property type="match status" value="1"/>
</dbReference>
<dbReference type="FunFam" id="4.10.860.10:FF:000007">
    <property type="entry name" value="UvrABC system protein C"/>
    <property type="match status" value="1"/>
</dbReference>
<dbReference type="Gene3D" id="1.10.150.20">
    <property type="entry name" value="5' to 3' exonuclease, C-terminal subdomain"/>
    <property type="match status" value="1"/>
</dbReference>
<dbReference type="Gene3D" id="3.40.1440.10">
    <property type="entry name" value="GIY-YIG endonuclease"/>
    <property type="match status" value="1"/>
</dbReference>
<dbReference type="Gene3D" id="4.10.860.10">
    <property type="entry name" value="UVR domain"/>
    <property type="match status" value="1"/>
</dbReference>
<dbReference type="Gene3D" id="3.30.420.340">
    <property type="entry name" value="UvrC, RNAse H endonuclease domain"/>
    <property type="match status" value="1"/>
</dbReference>
<dbReference type="HAMAP" id="MF_00203">
    <property type="entry name" value="UvrC"/>
    <property type="match status" value="1"/>
</dbReference>
<dbReference type="InterPro" id="IPR000305">
    <property type="entry name" value="GIY-YIG_endonuc"/>
</dbReference>
<dbReference type="InterPro" id="IPR035901">
    <property type="entry name" value="GIY-YIG_endonuc_sf"/>
</dbReference>
<dbReference type="InterPro" id="IPR047296">
    <property type="entry name" value="GIY-YIG_UvrC_Cho"/>
</dbReference>
<dbReference type="InterPro" id="IPR010994">
    <property type="entry name" value="RuvA_2-like"/>
</dbReference>
<dbReference type="InterPro" id="IPR001943">
    <property type="entry name" value="UVR_dom"/>
</dbReference>
<dbReference type="InterPro" id="IPR036876">
    <property type="entry name" value="UVR_dom_sf"/>
</dbReference>
<dbReference type="InterPro" id="IPR050066">
    <property type="entry name" value="UvrABC_protein_C"/>
</dbReference>
<dbReference type="InterPro" id="IPR004791">
    <property type="entry name" value="UvrC"/>
</dbReference>
<dbReference type="InterPro" id="IPR001162">
    <property type="entry name" value="UvrC_RNase_H_dom"/>
</dbReference>
<dbReference type="InterPro" id="IPR038476">
    <property type="entry name" value="UvrC_RNase_H_dom_sf"/>
</dbReference>
<dbReference type="NCBIfam" id="TIGR00194">
    <property type="entry name" value="uvrC"/>
    <property type="match status" value="1"/>
</dbReference>
<dbReference type="PANTHER" id="PTHR30562:SF1">
    <property type="entry name" value="UVRABC SYSTEM PROTEIN C"/>
    <property type="match status" value="1"/>
</dbReference>
<dbReference type="PANTHER" id="PTHR30562">
    <property type="entry name" value="UVRC/OXIDOREDUCTASE"/>
    <property type="match status" value="1"/>
</dbReference>
<dbReference type="Pfam" id="PF01541">
    <property type="entry name" value="GIY-YIG"/>
    <property type="match status" value="1"/>
</dbReference>
<dbReference type="Pfam" id="PF14520">
    <property type="entry name" value="HHH_5"/>
    <property type="match status" value="1"/>
</dbReference>
<dbReference type="Pfam" id="PF02151">
    <property type="entry name" value="UVR"/>
    <property type="match status" value="1"/>
</dbReference>
<dbReference type="Pfam" id="PF22920">
    <property type="entry name" value="UvrC_RNaseH"/>
    <property type="match status" value="1"/>
</dbReference>
<dbReference type="Pfam" id="PF08459">
    <property type="entry name" value="UvrC_RNaseH_dom"/>
    <property type="match status" value="1"/>
</dbReference>
<dbReference type="SMART" id="SM00465">
    <property type="entry name" value="GIYc"/>
    <property type="match status" value="1"/>
</dbReference>
<dbReference type="SUPFAM" id="SSF46600">
    <property type="entry name" value="C-terminal UvrC-binding domain of UvrB"/>
    <property type="match status" value="1"/>
</dbReference>
<dbReference type="SUPFAM" id="SSF82771">
    <property type="entry name" value="GIY-YIG endonuclease"/>
    <property type="match status" value="1"/>
</dbReference>
<dbReference type="SUPFAM" id="SSF47781">
    <property type="entry name" value="RuvA domain 2-like"/>
    <property type="match status" value="1"/>
</dbReference>
<dbReference type="PROSITE" id="PS50164">
    <property type="entry name" value="GIY_YIG"/>
    <property type="match status" value="1"/>
</dbReference>
<dbReference type="PROSITE" id="PS50151">
    <property type="entry name" value="UVR"/>
    <property type="match status" value="1"/>
</dbReference>
<dbReference type="PROSITE" id="PS50165">
    <property type="entry name" value="UVRC"/>
    <property type="match status" value="1"/>
</dbReference>
<accession>B5E2L2</accession>
<protein>
    <recommendedName>
        <fullName evidence="1">UvrABC system protein C</fullName>
        <shortName evidence="1">Protein UvrC</shortName>
    </recommendedName>
    <alternativeName>
        <fullName evidence="1">Excinuclease ABC subunit C</fullName>
    </alternativeName>
</protein>
<feature type="chain" id="PRO_1000099524" description="UvrABC system protein C">
    <location>
        <begin position="1"/>
        <end position="615"/>
    </location>
</feature>
<feature type="domain" description="GIY-YIG" evidence="1">
    <location>
        <begin position="14"/>
        <end position="91"/>
    </location>
</feature>
<feature type="domain" description="UVR" evidence="1">
    <location>
        <begin position="196"/>
        <end position="231"/>
    </location>
</feature>
<evidence type="ECO:0000255" key="1">
    <source>
        <dbReference type="HAMAP-Rule" id="MF_00203"/>
    </source>
</evidence>
<reference key="1">
    <citation type="journal article" date="2001" name="Microb. Drug Resist.">
        <title>Annotated draft genomic sequence from a Streptococcus pneumoniae type 19F clinical isolate.</title>
        <authorList>
            <person name="Dopazo J."/>
            <person name="Mendoza A."/>
            <person name="Herrero J."/>
            <person name="Caldara F."/>
            <person name="Humbert Y."/>
            <person name="Friedli L."/>
            <person name="Guerrier M."/>
            <person name="Grand-Schenk E."/>
            <person name="Gandin C."/>
            <person name="de Francesco M."/>
            <person name="Polissi A."/>
            <person name="Buell G."/>
            <person name="Feger G."/>
            <person name="Garcia E."/>
            <person name="Peitsch M."/>
            <person name="Garcia-Bustos J.F."/>
        </authorList>
    </citation>
    <scope>NUCLEOTIDE SEQUENCE [LARGE SCALE GENOMIC DNA]</scope>
    <source>
        <strain>G54</strain>
    </source>
</reference>
<reference key="2">
    <citation type="submission" date="2008-03" db="EMBL/GenBank/DDBJ databases">
        <title>Pneumococcal beta glucoside metabolism investigated by whole genome comparison.</title>
        <authorList>
            <person name="Mulas L."/>
            <person name="Trappetti C."/>
            <person name="Hakenbeck R."/>
            <person name="Iannelli F."/>
            <person name="Pozzi G."/>
            <person name="Davidsen T.M."/>
            <person name="Tettelin H."/>
            <person name="Oggioni M."/>
        </authorList>
    </citation>
    <scope>NUCLEOTIDE SEQUENCE [LARGE SCALE GENOMIC DNA]</scope>
    <source>
        <strain>G54</strain>
    </source>
</reference>
<keyword id="KW-0963">Cytoplasm</keyword>
<keyword id="KW-0227">DNA damage</keyword>
<keyword id="KW-0228">DNA excision</keyword>
<keyword id="KW-0234">DNA repair</keyword>
<keyword id="KW-0267">Excision nuclease</keyword>
<keyword id="KW-0742">SOS response</keyword>
<sequence length="615" mass="70553">MNNLIKSKLELLPTSPGCYIHKDKNGTIIYVGKAKNLRNRVRSYFRGSHDTKTEALVSEIVDFEFIVTESNIEALLLEINLIKENKPKYNIMLKDDKSYPFIKITNERYPRLIITRQVKKDGGLYFGPYPDVGAANEIKRLLDRIFPFRKCTNPPSKVCFYYHIGQCMAHTICKKDEAYFKSMAQEVSDFLKGQDNKIIDELKGKMAAAAQTMEFERAAEYRDLIQAIGTLRTKQRVMAKDLQNRDVFGYYVDKGWMCVQVFFVRQGKLIERDVNLFPYFNDPDEDFLTYVGQFYQEKSHLVPNEVLIPQDIDEEAVKALVDSKILKPQRGEKKQLVNLAIKNARVSLEQKFNLLEKSVEKTQGAIENLGRLLQIPTPVRIESFDNSNIMGTSPVSAMVVFVNGKPSKKDYRKYKIKTVVGPDDYASMREVIRRRYGRVQREALTPPDLIVIDGGQGQVNIAKQVIQEELGLDIPIAGLQKNDKHQTHELLFGDPLEVVDLSRNSQEFFLLQRIQDEVHRFAITFHRQLRSKNSFSSQLDGIDGLGPKRKQNLMRHFKSLTKIKEASVDEIVEVGVPRAVAEAVQTKLNPQETEILLQVAEERVDYQTEGNHNKP</sequence>